<feature type="peptide" id="PRO_0000044434" description="Locustatachykinin-3">
    <location>
        <begin position="1"/>
        <end position="10"/>
    </location>
</feature>
<feature type="modified residue" description="Arginine amide" evidence="1">
    <location>
        <position position="10"/>
    </location>
</feature>
<evidence type="ECO:0000269" key="1">
    <source>
    </source>
</evidence>
<organism>
    <name type="scientific">Locusta migratoria</name>
    <name type="common">Migratory locust</name>
    <dbReference type="NCBI Taxonomy" id="7004"/>
    <lineage>
        <taxon>Eukaryota</taxon>
        <taxon>Metazoa</taxon>
        <taxon>Ecdysozoa</taxon>
        <taxon>Arthropoda</taxon>
        <taxon>Hexapoda</taxon>
        <taxon>Insecta</taxon>
        <taxon>Pterygota</taxon>
        <taxon>Neoptera</taxon>
        <taxon>Polyneoptera</taxon>
        <taxon>Orthoptera</taxon>
        <taxon>Caelifera</taxon>
        <taxon>Acrididea</taxon>
        <taxon>Acridomorpha</taxon>
        <taxon>Acridoidea</taxon>
        <taxon>Acrididae</taxon>
        <taxon>Oedipodinae</taxon>
        <taxon>Locusta</taxon>
    </lineage>
</organism>
<accession>P30249</accession>
<proteinExistence type="evidence at protein level"/>
<keyword id="KW-0027">Amidation</keyword>
<keyword id="KW-0903">Direct protein sequencing</keyword>
<keyword id="KW-0527">Neuropeptide</keyword>
<keyword id="KW-0964">Secreted</keyword>
<protein>
    <recommendedName>
        <fullName>Locustatachykinin-3</fullName>
    </recommendedName>
    <alternativeName>
        <fullName>Locustatachykinin III</fullName>
        <shortName>TK-III</shortName>
    </alternativeName>
</protein>
<dbReference type="PIR" id="A60073">
    <property type="entry name" value="ECLQ3M"/>
</dbReference>
<dbReference type="GO" id="GO:0005576">
    <property type="term" value="C:extracellular region"/>
    <property type="evidence" value="ECO:0007669"/>
    <property type="project" value="UniProtKB-SubCell"/>
</dbReference>
<dbReference type="GO" id="GO:0007218">
    <property type="term" value="P:neuropeptide signaling pathway"/>
    <property type="evidence" value="ECO:0007669"/>
    <property type="project" value="UniProtKB-KW"/>
</dbReference>
<name>TKL3_LOCMI</name>
<sequence>APQAGFYGVR</sequence>
<comment type="function">
    <text>Myoactive peptide. Stimulates the contraction of the oviduct and foregut.</text>
</comment>
<comment type="subcellular location">
    <subcellularLocation>
        <location>Secreted</location>
    </subcellularLocation>
</comment>
<reference key="1">
    <citation type="journal article" date="1990" name="Regul. Pept.">
        <title>Locustatachykinin III and IV: two additional insect neuropeptides with homology to peptides of the vertebrate tachykinin family.</title>
        <authorList>
            <person name="Schoofs L."/>
            <person name="Holman G.M."/>
            <person name="Hayes T.K."/>
            <person name="Kochansky J.P."/>
            <person name="Nachman R.J."/>
            <person name="de Loof A."/>
        </authorList>
    </citation>
    <scope>PROTEIN SEQUENCE</scope>
    <scope>AMIDATION AT ARG-10</scope>
    <source>
        <tissue>Brain</tissue>
    </source>
</reference>